<protein>
    <recommendedName>
        <fullName>Iron-sulfur cluster assembly factor IBA57 homolog, mitochondrial</fullName>
    </recommendedName>
</protein>
<organism>
    <name type="scientific">Dictyostelium discoideum</name>
    <name type="common">Social amoeba</name>
    <dbReference type="NCBI Taxonomy" id="44689"/>
    <lineage>
        <taxon>Eukaryota</taxon>
        <taxon>Amoebozoa</taxon>
        <taxon>Evosea</taxon>
        <taxon>Eumycetozoa</taxon>
        <taxon>Dictyostelia</taxon>
        <taxon>Dictyosteliales</taxon>
        <taxon>Dictyosteliaceae</taxon>
        <taxon>Dictyostelium</taxon>
    </lineage>
</organism>
<name>CAF17_DICDI</name>
<keyword id="KW-0496">Mitochondrion</keyword>
<keyword id="KW-1185">Reference proteome</keyword>
<keyword id="KW-0809">Transit peptide</keyword>
<reference key="1">
    <citation type="journal article" date="2005" name="Nature">
        <title>The genome of the social amoeba Dictyostelium discoideum.</title>
        <authorList>
            <person name="Eichinger L."/>
            <person name="Pachebat J.A."/>
            <person name="Gloeckner G."/>
            <person name="Rajandream M.A."/>
            <person name="Sucgang R."/>
            <person name="Berriman M."/>
            <person name="Song J."/>
            <person name="Olsen R."/>
            <person name="Szafranski K."/>
            <person name="Xu Q."/>
            <person name="Tunggal B."/>
            <person name="Kummerfeld S."/>
            <person name="Madera M."/>
            <person name="Konfortov B.A."/>
            <person name="Rivero F."/>
            <person name="Bankier A.T."/>
            <person name="Lehmann R."/>
            <person name="Hamlin N."/>
            <person name="Davies R."/>
            <person name="Gaudet P."/>
            <person name="Fey P."/>
            <person name="Pilcher K."/>
            <person name="Chen G."/>
            <person name="Saunders D."/>
            <person name="Sodergren E.J."/>
            <person name="Davis P."/>
            <person name="Kerhornou A."/>
            <person name="Nie X."/>
            <person name="Hall N."/>
            <person name="Anjard C."/>
            <person name="Hemphill L."/>
            <person name="Bason N."/>
            <person name="Farbrother P."/>
            <person name="Desany B."/>
            <person name="Just E."/>
            <person name="Morio T."/>
            <person name="Rost R."/>
            <person name="Churcher C.M."/>
            <person name="Cooper J."/>
            <person name="Haydock S."/>
            <person name="van Driessche N."/>
            <person name="Cronin A."/>
            <person name="Goodhead I."/>
            <person name="Muzny D.M."/>
            <person name="Mourier T."/>
            <person name="Pain A."/>
            <person name="Lu M."/>
            <person name="Harper D."/>
            <person name="Lindsay R."/>
            <person name="Hauser H."/>
            <person name="James K.D."/>
            <person name="Quiles M."/>
            <person name="Madan Babu M."/>
            <person name="Saito T."/>
            <person name="Buchrieser C."/>
            <person name="Wardroper A."/>
            <person name="Felder M."/>
            <person name="Thangavelu M."/>
            <person name="Johnson D."/>
            <person name="Knights A."/>
            <person name="Loulseged H."/>
            <person name="Mungall K.L."/>
            <person name="Oliver K."/>
            <person name="Price C."/>
            <person name="Quail M.A."/>
            <person name="Urushihara H."/>
            <person name="Hernandez J."/>
            <person name="Rabbinowitsch E."/>
            <person name="Steffen D."/>
            <person name="Sanders M."/>
            <person name="Ma J."/>
            <person name="Kohara Y."/>
            <person name="Sharp S."/>
            <person name="Simmonds M.N."/>
            <person name="Spiegler S."/>
            <person name="Tivey A."/>
            <person name="Sugano S."/>
            <person name="White B."/>
            <person name="Walker D."/>
            <person name="Woodward J.R."/>
            <person name="Winckler T."/>
            <person name="Tanaka Y."/>
            <person name="Shaulsky G."/>
            <person name="Schleicher M."/>
            <person name="Weinstock G.M."/>
            <person name="Rosenthal A."/>
            <person name="Cox E.C."/>
            <person name="Chisholm R.L."/>
            <person name="Gibbs R.A."/>
            <person name="Loomis W.F."/>
            <person name="Platzer M."/>
            <person name="Kay R.R."/>
            <person name="Williams J.G."/>
            <person name="Dear P.H."/>
            <person name="Noegel A.A."/>
            <person name="Barrell B.G."/>
            <person name="Kuspa A."/>
        </authorList>
    </citation>
    <scope>NUCLEOTIDE SEQUENCE [LARGE SCALE GENOMIC DNA]</scope>
    <source>
        <strain>AX4</strain>
    </source>
</reference>
<gene>
    <name type="primary">caf17</name>
    <name type="ORF">DDB_G0285011</name>
</gene>
<proteinExistence type="inferred from homology"/>
<dbReference type="EMBL" id="AAFI02000073">
    <property type="protein sequence ID" value="EAL64969.1"/>
    <property type="molecule type" value="Genomic_DNA"/>
</dbReference>
<dbReference type="RefSeq" id="XP_639996.1">
    <property type="nucleotide sequence ID" value="XM_634904.1"/>
</dbReference>
<dbReference type="SMR" id="Q54NS1"/>
<dbReference type="FunCoup" id="Q54NS1">
    <property type="interactions" value="269"/>
</dbReference>
<dbReference type="STRING" id="44689.Q54NS1"/>
<dbReference type="PaxDb" id="44689-DDB0304699"/>
<dbReference type="EnsemblProtists" id="EAL64969">
    <property type="protein sequence ID" value="EAL64969"/>
    <property type="gene ID" value="DDB_G0285011"/>
</dbReference>
<dbReference type="GeneID" id="8624914"/>
<dbReference type="KEGG" id="ddi:DDB_G0285011"/>
<dbReference type="dictyBase" id="DDB_G0285011"/>
<dbReference type="VEuPathDB" id="AmoebaDB:DDB_G0285011"/>
<dbReference type="eggNOG" id="KOG2929">
    <property type="taxonomic scope" value="Eukaryota"/>
</dbReference>
<dbReference type="HOGENOM" id="CLU_007884_7_0_1"/>
<dbReference type="InParanoid" id="Q54NS1"/>
<dbReference type="OMA" id="NMLVAND"/>
<dbReference type="PhylomeDB" id="Q54NS1"/>
<dbReference type="PRO" id="PR:Q54NS1"/>
<dbReference type="Proteomes" id="UP000002195">
    <property type="component" value="Chromosome 4"/>
</dbReference>
<dbReference type="GO" id="GO:0005759">
    <property type="term" value="C:mitochondrial matrix"/>
    <property type="evidence" value="ECO:0000318"/>
    <property type="project" value="GO_Central"/>
</dbReference>
<dbReference type="GO" id="GO:0016740">
    <property type="term" value="F:transferase activity"/>
    <property type="evidence" value="ECO:0007669"/>
    <property type="project" value="UniProtKB-KW"/>
</dbReference>
<dbReference type="GO" id="GO:0016226">
    <property type="term" value="P:iron-sulfur cluster assembly"/>
    <property type="evidence" value="ECO:0000318"/>
    <property type="project" value="GO_Central"/>
</dbReference>
<dbReference type="FunFam" id="3.30.1360.120:FF:000050">
    <property type="entry name" value="Putative transferase caf17 homolog, mitochondrial"/>
    <property type="match status" value="1"/>
</dbReference>
<dbReference type="Gene3D" id="3.30.1360.120">
    <property type="entry name" value="Probable tRNA modification gtpase trme, domain 1"/>
    <property type="match status" value="1"/>
</dbReference>
<dbReference type="InterPro" id="IPR027266">
    <property type="entry name" value="TrmE/GcvT_dom1"/>
</dbReference>
<dbReference type="InterPro" id="IPR045179">
    <property type="entry name" value="YgfZ/GcvT"/>
</dbReference>
<dbReference type="InterPro" id="IPR017703">
    <property type="entry name" value="YgfZ/GcvT_CS"/>
</dbReference>
<dbReference type="NCBIfam" id="TIGR03317">
    <property type="entry name" value="ygfZ_signature"/>
    <property type="match status" value="1"/>
</dbReference>
<dbReference type="PANTHER" id="PTHR22602">
    <property type="entry name" value="TRANSFERASE CAF17, MITOCHONDRIAL-RELATED"/>
    <property type="match status" value="1"/>
</dbReference>
<dbReference type="PANTHER" id="PTHR22602:SF0">
    <property type="entry name" value="TRANSFERASE CAF17, MITOCHONDRIAL-RELATED"/>
    <property type="match status" value="1"/>
</dbReference>
<dbReference type="SUPFAM" id="SSF103025">
    <property type="entry name" value="Folate-binding domain"/>
    <property type="match status" value="1"/>
</dbReference>
<sequence length="408" mass="45978">MINLKSLEKIKKCVVPLKSRSLIKVVGPDALKHLQGLTTNNLNRLKDNQSTNTSIYNGFLQGNGRLLFDSIISLDREHHNGNPKPISMAPGSSDNSGLDSFIVDIDSSILEEAMAHLKQYKLRNKIDIIDVTENFNVYSILDKTYKTVRDDSLFAQLEKDQCSVMMDPRHQIMGVRLLVPNNKQLVVEERLSKYESKDETIYNLFRLSQGIPQGVKEYQWGNIIPLEYNFDLLNGVDFHKGCYLGQELTSRTHFTGLIRKRIFPVVMSVKDVESASVMDEAIIDPTKPPKESLLFPKRILNALNLEHPPSDSALIVKNISPKHNQQQSSDEPVKVGTDSEIKTVSRSTDKFITGIHGVGLAMLKVENIDIFQLDNTVVHDKSNKELTVLPPCWISKLTSLQMTPQQVS</sequence>
<evidence type="ECO:0000250" key="1">
    <source>
        <dbReference type="UniProtKB" id="P47158"/>
    </source>
</evidence>
<evidence type="ECO:0000255" key="2"/>
<evidence type="ECO:0000305" key="3"/>
<feature type="transit peptide" description="Mitochondrion" evidence="2">
    <location>
        <begin position="1"/>
        <end position="74"/>
    </location>
</feature>
<feature type="chain" id="PRO_0000367253" description="Iron-sulfur cluster assembly factor IBA57 homolog, mitochondrial">
    <location>
        <begin position="75"/>
        <end position="408"/>
    </location>
</feature>
<accession>Q54NS1</accession>
<comment type="subcellular location">
    <subcellularLocation>
        <location evidence="1">Mitochondrion matrix</location>
    </subcellularLocation>
</comment>
<comment type="similarity">
    <text evidence="3">Belongs to the GcvT family. CAF17/IBA57 subfamily.</text>
</comment>